<organism>
    <name type="scientific">Kluyveromyces lactis (strain ATCC 8585 / CBS 2359 / DSM 70799 / NBRC 1267 / NRRL Y-1140 / WM37)</name>
    <name type="common">Yeast</name>
    <name type="synonym">Candida sphaerica</name>
    <dbReference type="NCBI Taxonomy" id="284590"/>
    <lineage>
        <taxon>Eukaryota</taxon>
        <taxon>Fungi</taxon>
        <taxon>Dikarya</taxon>
        <taxon>Ascomycota</taxon>
        <taxon>Saccharomycotina</taxon>
        <taxon>Saccharomycetes</taxon>
        <taxon>Saccharomycetales</taxon>
        <taxon>Saccharomycetaceae</taxon>
        <taxon>Kluyveromyces</taxon>
    </lineage>
</organism>
<proteinExistence type="inferred from homology"/>
<evidence type="ECO:0000250" key="1"/>
<evidence type="ECO:0000256" key="2">
    <source>
        <dbReference type="SAM" id="MobiDB-lite"/>
    </source>
</evidence>
<evidence type="ECO:0000305" key="3"/>
<protein>
    <recommendedName>
        <fullName>High-osmolarity-induced transcription protein 1</fullName>
    </recommendedName>
</protein>
<sequence length="679" mass="73929">MSAMENRKNSLHGSPNGLSGLNMVLPREGDSNNGIMTTEDARNGKLKGDKDLNMKMHVGMGTTPINTRLGNTMNSDVANSMSYLLEQPQSGTLIGDRLILETSEEPVGVNLVDGQNARNNQQMLNNASHMDPAFTLPADDTMNNSAAAAAAAAAAAAASTGPSQPTMQSTPSISTGGSTNFQVQIAQRLADIDQRILRMEMLMDNVCNKIDSHSQQQSLWKNDMHQMENKVIDVLDEIKSNIFSLKRQVSNQGDGAFAAELINAISNVSNKHIRKNTYGFPAGNPQGNDMGQTMNGYNNAMQLSSMAAPMSYVPGEQVNLNQLGNSKDQIDRFLTKSANEFMLDPSGLKKRRKNPSSSNESPITLSHTKTHSTSQPINYSASLPNLNLDALSKVMLPQHQQLTHNGGSQHPLSDKSIKFGISSTSHSSSNSSDSDDEEDDIDDEEDEAEDEEDENDDSRDVNDHDNVEGRETLTKKSMKPGNSIEGRDPSGTNGTVNSTTNNHMNTIDTATNTSSQLQGTVIRSTADTENPKQESNASAAATSGAATGVATGTTTANIATSASDKLKLHGDSKKEPKFTMIKAPSSVKEIWREYTQGIDGRPSIKSLDQKFGNKWRANKNKKTYSRRKRMYKFILNGIKKGKSEEEMVQMLENKRIYKDSDGNQKKRTIGWLQQSLSGI</sequence>
<dbReference type="EMBL" id="CR382124">
    <property type="protein sequence ID" value="CAH00659.1"/>
    <property type="molecule type" value="Genomic_DNA"/>
</dbReference>
<dbReference type="RefSeq" id="XP_453563.1">
    <property type="nucleotide sequence ID" value="XM_453563.1"/>
</dbReference>
<dbReference type="SMR" id="Q6CR76"/>
<dbReference type="FunCoup" id="Q6CR76">
    <property type="interactions" value="310"/>
</dbReference>
<dbReference type="STRING" id="284590.Q6CR76"/>
<dbReference type="PaxDb" id="284590-Q6CR76"/>
<dbReference type="KEGG" id="kla:KLLA0_D11264g"/>
<dbReference type="eggNOG" id="ENOG502QQ7G">
    <property type="taxonomic scope" value="Eukaryota"/>
</dbReference>
<dbReference type="HOGENOM" id="CLU_404926_0_0_1"/>
<dbReference type="InParanoid" id="Q6CR76"/>
<dbReference type="Proteomes" id="UP000000598">
    <property type="component" value="Chromosome D"/>
</dbReference>
<dbReference type="GO" id="GO:0005634">
    <property type="term" value="C:nucleus"/>
    <property type="evidence" value="ECO:0007669"/>
    <property type="project" value="UniProtKB-SubCell"/>
</dbReference>
<dbReference type="GO" id="GO:0000981">
    <property type="term" value="F:DNA-binding transcription factor activity, RNA polymerase II-specific"/>
    <property type="evidence" value="ECO:0007669"/>
    <property type="project" value="TreeGrafter"/>
</dbReference>
<dbReference type="GO" id="GO:0000978">
    <property type="term" value="F:RNA polymerase II cis-regulatory region sequence-specific DNA binding"/>
    <property type="evidence" value="ECO:0007669"/>
    <property type="project" value="TreeGrafter"/>
</dbReference>
<dbReference type="GO" id="GO:0060963">
    <property type="term" value="P:positive regulation of ribosomal protein gene transcription by RNA polymerase II"/>
    <property type="evidence" value="ECO:0007669"/>
    <property type="project" value="TreeGrafter"/>
</dbReference>
<dbReference type="InterPro" id="IPR052146">
    <property type="entry name" value="HOT1"/>
</dbReference>
<dbReference type="InterPro" id="IPR022210">
    <property type="entry name" value="TF_GCR1-like"/>
</dbReference>
<dbReference type="PANTHER" id="PTHR37784:SF2">
    <property type="entry name" value="HIGH-OSMOLARITY-INDUCED TRANSCRIPTION PROTEIN 1"/>
    <property type="match status" value="1"/>
</dbReference>
<dbReference type="PANTHER" id="PTHR37784">
    <property type="entry name" value="PROTEIN MSN1"/>
    <property type="match status" value="1"/>
</dbReference>
<dbReference type="Pfam" id="PF12550">
    <property type="entry name" value="GCR1_C"/>
    <property type="match status" value="1"/>
</dbReference>
<keyword id="KW-0010">Activator</keyword>
<keyword id="KW-0539">Nucleus</keyword>
<keyword id="KW-1185">Reference proteome</keyword>
<keyword id="KW-0804">Transcription</keyword>
<keyword id="KW-0805">Transcription regulation</keyword>
<gene>
    <name type="primary">HOT1</name>
    <name type="ordered locus">KLLA0D11264g</name>
</gene>
<reference key="1">
    <citation type="journal article" date="2004" name="Nature">
        <title>Genome evolution in yeasts.</title>
        <authorList>
            <person name="Dujon B."/>
            <person name="Sherman D."/>
            <person name="Fischer G."/>
            <person name="Durrens P."/>
            <person name="Casaregola S."/>
            <person name="Lafontaine I."/>
            <person name="de Montigny J."/>
            <person name="Marck C."/>
            <person name="Neuveglise C."/>
            <person name="Talla E."/>
            <person name="Goffard N."/>
            <person name="Frangeul L."/>
            <person name="Aigle M."/>
            <person name="Anthouard V."/>
            <person name="Babour A."/>
            <person name="Barbe V."/>
            <person name="Barnay S."/>
            <person name="Blanchin S."/>
            <person name="Beckerich J.-M."/>
            <person name="Beyne E."/>
            <person name="Bleykasten C."/>
            <person name="Boisrame A."/>
            <person name="Boyer J."/>
            <person name="Cattolico L."/>
            <person name="Confanioleri F."/>
            <person name="de Daruvar A."/>
            <person name="Despons L."/>
            <person name="Fabre E."/>
            <person name="Fairhead C."/>
            <person name="Ferry-Dumazet H."/>
            <person name="Groppi A."/>
            <person name="Hantraye F."/>
            <person name="Hennequin C."/>
            <person name="Jauniaux N."/>
            <person name="Joyet P."/>
            <person name="Kachouri R."/>
            <person name="Kerrest A."/>
            <person name="Koszul R."/>
            <person name="Lemaire M."/>
            <person name="Lesur I."/>
            <person name="Ma L."/>
            <person name="Muller H."/>
            <person name="Nicaud J.-M."/>
            <person name="Nikolski M."/>
            <person name="Oztas S."/>
            <person name="Ozier-Kalogeropoulos O."/>
            <person name="Pellenz S."/>
            <person name="Potier S."/>
            <person name="Richard G.-F."/>
            <person name="Straub M.-L."/>
            <person name="Suleau A."/>
            <person name="Swennen D."/>
            <person name="Tekaia F."/>
            <person name="Wesolowski-Louvel M."/>
            <person name="Westhof E."/>
            <person name="Wirth B."/>
            <person name="Zeniou-Meyer M."/>
            <person name="Zivanovic Y."/>
            <person name="Bolotin-Fukuhara M."/>
            <person name="Thierry A."/>
            <person name="Bouchier C."/>
            <person name="Caudron B."/>
            <person name="Scarpelli C."/>
            <person name="Gaillardin C."/>
            <person name="Weissenbach J."/>
            <person name="Wincker P."/>
            <person name="Souciet J.-L."/>
        </authorList>
    </citation>
    <scope>NUCLEOTIDE SEQUENCE [LARGE SCALE GENOMIC DNA]</scope>
    <source>
        <strain>ATCC 8585 / CBS 2359 / DSM 70799 / NBRC 1267 / NRRL Y-1140 / WM37</strain>
    </source>
</reference>
<feature type="chain" id="PRO_0000289670" description="High-osmolarity-induced transcription protein 1">
    <location>
        <begin position="1"/>
        <end position="679"/>
    </location>
</feature>
<feature type="region of interest" description="Disordered" evidence="2">
    <location>
        <begin position="1"/>
        <end position="49"/>
    </location>
</feature>
<feature type="region of interest" description="Disordered" evidence="2">
    <location>
        <begin position="344"/>
        <end position="379"/>
    </location>
</feature>
<feature type="region of interest" description="Disordered" evidence="2">
    <location>
        <begin position="402"/>
        <end position="546"/>
    </location>
</feature>
<feature type="compositionally biased region" description="Basic and acidic residues" evidence="2">
    <location>
        <begin position="39"/>
        <end position="49"/>
    </location>
</feature>
<feature type="compositionally biased region" description="Polar residues" evidence="2">
    <location>
        <begin position="355"/>
        <end position="379"/>
    </location>
</feature>
<feature type="compositionally biased region" description="Polar residues" evidence="2">
    <location>
        <begin position="402"/>
        <end position="411"/>
    </location>
</feature>
<feature type="compositionally biased region" description="Low complexity" evidence="2">
    <location>
        <begin position="422"/>
        <end position="432"/>
    </location>
</feature>
<feature type="compositionally biased region" description="Acidic residues" evidence="2">
    <location>
        <begin position="433"/>
        <end position="457"/>
    </location>
</feature>
<feature type="compositionally biased region" description="Basic and acidic residues" evidence="2">
    <location>
        <begin position="458"/>
        <end position="474"/>
    </location>
</feature>
<feature type="compositionally biased region" description="Low complexity" evidence="2">
    <location>
        <begin position="490"/>
        <end position="502"/>
    </location>
</feature>
<feature type="compositionally biased region" description="Polar residues" evidence="2">
    <location>
        <begin position="503"/>
        <end position="528"/>
    </location>
</feature>
<feature type="compositionally biased region" description="Low complexity" evidence="2">
    <location>
        <begin position="535"/>
        <end position="546"/>
    </location>
</feature>
<name>HOT1_KLULA</name>
<comment type="function">
    <text evidence="1">Required for a complete transcriptional response to osmotic stress.</text>
</comment>
<comment type="subcellular location">
    <subcellularLocation>
        <location evidence="1">Nucleus</location>
    </subcellularLocation>
</comment>
<comment type="similarity">
    <text evidence="3">Belongs to the HOT1 family.</text>
</comment>
<accession>Q6CR76</accession>